<comment type="catalytic activity">
    <reaction evidence="1">
        <text>1-(5-phospho-beta-D-ribosyl)-ATP + H2O = 1-(5-phospho-beta-D-ribosyl)-5'-AMP + diphosphate + H(+)</text>
        <dbReference type="Rhea" id="RHEA:22828"/>
        <dbReference type="ChEBI" id="CHEBI:15377"/>
        <dbReference type="ChEBI" id="CHEBI:15378"/>
        <dbReference type="ChEBI" id="CHEBI:33019"/>
        <dbReference type="ChEBI" id="CHEBI:59457"/>
        <dbReference type="ChEBI" id="CHEBI:73183"/>
        <dbReference type="EC" id="3.6.1.31"/>
    </reaction>
</comment>
<comment type="pathway">
    <text evidence="1">Amino-acid biosynthesis; L-histidine biosynthesis; L-histidine from 5-phospho-alpha-D-ribose 1-diphosphate: step 2/9.</text>
</comment>
<comment type="subcellular location">
    <subcellularLocation>
        <location evidence="1">Cytoplasm</location>
    </subcellularLocation>
</comment>
<comment type="similarity">
    <text evidence="1">Belongs to the PRA-PH family.</text>
</comment>
<gene>
    <name evidence="1" type="primary">hisE</name>
    <name type="ordered locus">Rpic_3221</name>
</gene>
<sequence>MSDTLRRLGEVLESRKLANGGDPEKSYIARLFNKGDDAILKKIGEEATETVMAAKDARAAGMTDEARSKVVYEVADLWFHTMVLLSHFDLTPDDVVGELARREGLSGLEEKALRKLQARDAAGD</sequence>
<organism>
    <name type="scientific">Ralstonia pickettii (strain 12J)</name>
    <dbReference type="NCBI Taxonomy" id="402626"/>
    <lineage>
        <taxon>Bacteria</taxon>
        <taxon>Pseudomonadati</taxon>
        <taxon>Pseudomonadota</taxon>
        <taxon>Betaproteobacteria</taxon>
        <taxon>Burkholderiales</taxon>
        <taxon>Burkholderiaceae</taxon>
        <taxon>Ralstonia</taxon>
    </lineage>
</organism>
<name>HIS2_RALPJ</name>
<proteinExistence type="inferred from homology"/>
<dbReference type="EC" id="3.6.1.31" evidence="1"/>
<dbReference type="EMBL" id="CP001068">
    <property type="protein sequence ID" value="ACD28343.1"/>
    <property type="molecule type" value="Genomic_DNA"/>
</dbReference>
<dbReference type="SMR" id="B2UEE3"/>
<dbReference type="STRING" id="402626.Rpic_3221"/>
<dbReference type="KEGG" id="rpi:Rpic_3221"/>
<dbReference type="eggNOG" id="COG0140">
    <property type="taxonomic scope" value="Bacteria"/>
</dbReference>
<dbReference type="HOGENOM" id="CLU_123337_1_2_4"/>
<dbReference type="UniPathway" id="UPA00031">
    <property type="reaction ID" value="UER00007"/>
</dbReference>
<dbReference type="GO" id="GO:0005737">
    <property type="term" value="C:cytoplasm"/>
    <property type="evidence" value="ECO:0007669"/>
    <property type="project" value="UniProtKB-SubCell"/>
</dbReference>
<dbReference type="GO" id="GO:0005524">
    <property type="term" value="F:ATP binding"/>
    <property type="evidence" value="ECO:0007669"/>
    <property type="project" value="UniProtKB-KW"/>
</dbReference>
<dbReference type="GO" id="GO:0004636">
    <property type="term" value="F:phosphoribosyl-ATP diphosphatase activity"/>
    <property type="evidence" value="ECO:0007669"/>
    <property type="project" value="UniProtKB-UniRule"/>
</dbReference>
<dbReference type="GO" id="GO:0000105">
    <property type="term" value="P:L-histidine biosynthetic process"/>
    <property type="evidence" value="ECO:0007669"/>
    <property type="project" value="UniProtKB-UniRule"/>
</dbReference>
<dbReference type="CDD" id="cd11534">
    <property type="entry name" value="NTP-PPase_HisIE_like"/>
    <property type="match status" value="1"/>
</dbReference>
<dbReference type="Gene3D" id="1.10.287.1080">
    <property type="entry name" value="MazG-like"/>
    <property type="match status" value="1"/>
</dbReference>
<dbReference type="HAMAP" id="MF_01020">
    <property type="entry name" value="HisE"/>
    <property type="match status" value="1"/>
</dbReference>
<dbReference type="InterPro" id="IPR008179">
    <property type="entry name" value="HisE"/>
</dbReference>
<dbReference type="InterPro" id="IPR021130">
    <property type="entry name" value="PRib-ATP_PPHydrolase-like"/>
</dbReference>
<dbReference type="NCBIfam" id="TIGR03188">
    <property type="entry name" value="histidine_hisI"/>
    <property type="match status" value="1"/>
</dbReference>
<dbReference type="NCBIfam" id="NF001611">
    <property type="entry name" value="PRK00400.1-3"/>
    <property type="match status" value="1"/>
</dbReference>
<dbReference type="PANTHER" id="PTHR42945">
    <property type="entry name" value="HISTIDINE BIOSYNTHESIS BIFUNCTIONAL PROTEIN"/>
    <property type="match status" value="1"/>
</dbReference>
<dbReference type="PANTHER" id="PTHR42945:SF9">
    <property type="entry name" value="HISTIDINE BIOSYNTHESIS BIFUNCTIONAL PROTEIN HISIE"/>
    <property type="match status" value="1"/>
</dbReference>
<dbReference type="Pfam" id="PF01503">
    <property type="entry name" value="PRA-PH"/>
    <property type="match status" value="1"/>
</dbReference>
<dbReference type="SUPFAM" id="SSF101386">
    <property type="entry name" value="all-alpha NTP pyrophosphatases"/>
    <property type="match status" value="1"/>
</dbReference>
<feature type="chain" id="PRO_1000190387" description="Phosphoribosyl-ATP pyrophosphatase">
    <location>
        <begin position="1"/>
        <end position="124"/>
    </location>
</feature>
<protein>
    <recommendedName>
        <fullName evidence="1">Phosphoribosyl-ATP pyrophosphatase</fullName>
        <shortName evidence="1">PRA-PH</shortName>
        <ecNumber evidence="1">3.6.1.31</ecNumber>
    </recommendedName>
</protein>
<keyword id="KW-0028">Amino-acid biosynthesis</keyword>
<keyword id="KW-0067">ATP-binding</keyword>
<keyword id="KW-0963">Cytoplasm</keyword>
<keyword id="KW-0368">Histidine biosynthesis</keyword>
<keyword id="KW-0378">Hydrolase</keyword>
<keyword id="KW-0547">Nucleotide-binding</keyword>
<accession>B2UEE3</accession>
<evidence type="ECO:0000255" key="1">
    <source>
        <dbReference type="HAMAP-Rule" id="MF_01020"/>
    </source>
</evidence>
<reference key="1">
    <citation type="submission" date="2008-05" db="EMBL/GenBank/DDBJ databases">
        <title>Complete sequence of chromosome 1 of Ralstonia pickettii 12J.</title>
        <authorList>
            <person name="Lucas S."/>
            <person name="Copeland A."/>
            <person name="Lapidus A."/>
            <person name="Glavina del Rio T."/>
            <person name="Dalin E."/>
            <person name="Tice H."/>
            <person name="Bruce D."/>
            <person name="Goodwin L."/>
            <person name="Pitluck S."/>
            <person name="Meincke L."/>
            <person name="Brettin T."/>
            <person name="Detter J.C."/>
            <person name="Han C."/>
            <person name="Kuske C.R."/>
            <person name="Schmutz J."/>
            <person name="Larimer F."/>
            <person name="Land M."/>
            <person name="Hauser L."/>
            <person name="Kyrpides N."/>
            <person name="Mikhailova N."/>
            <person name="Marsh T."/>
            <person name="Richardson P."/>
        </authorList>
    </citation>
    <scope>NUCLEOTIDE SEQUENCE [LARGE SCALE GENOMIC DNA]</scope>
    <source>
        <strain>12J</strain>
    </source>
</reference>